<protein>
    <recommendedName>
        <fullName>Imidazoleglycerol-phosphate dehydratase</fullName>
        <shortName>IGPD</shortName>
        <ecNumber>4.2.1.19</ecNumber>
    </recommendedName>
</protein>
<keyword id="KW-0028">Amino-acid biosynthesis</keyword>
<keyword id="KW-0368">Histidine biosynthesis</keyword>
<keyword id="KW-0456">Lyase</keyword>
<keyword id="KW-1185">Reference proteome</keyword>
<comment type="catalytic activity">
    <reaction>
        <text>D-erythro-1-(imidazol-4-yl)glycerol 3-phosphate = 3-(imidazol-4-yl)-2-oxopropyl phosphate + H2O</text>
        <dbReference type="Rhea" id="RHEA:11040"/>
        <dbReference type="ChEBI" id="CHEBI:15377"/>
        <dbReference type="ChEBI" id="CHEBI:57766"/>
        <dbReference type="ChEBI" id="CHEBI:58278"/>
        <dbReference type="EC" id="4.2.1.19"/>
    </reaction>
</comment>
<comment type="pathway">
    <text>Amino-acid biosynthesis; L-histidine biosynthesis; L-histidine from 5-phospho-alpha-D-ribose 1-diphosphate: step 6/9.</text>
</comment>
<comment type="similarity">
    <text evidence="1">Belongs to the imidazoleglycerol-phosphate dehydratase family.</text>
</comment>
<gene>
    <name type="primary">HIS3</name>
    <name type="ordered locus">CAGL0L02937g</name>
</gene>
<evidence type="ECO:0000305" key="1"/>
<dbReference type="EC" id="4.2.1.19"/>
<dbReference type="EMBL" id="U31470">
    <property type="protein sequence ID" value="AAC49145.1"/>
    <property type="molecule type" value="Genomic_DNA"/>
</dbReference>
<dbReference type="EMBL" id="AY083607">
    <property type="protein sequence ID" value="AAM08101.1"/>
    <property type="molecule type" value="Genomic_DNA"/>
</dbReference>
<dbReference type="EMBL" id="CR380958">
    <property type="protein sequence ID" value="CAG61869.1"/>
    <property type="molecule type" value="Genomic_DNA"/>
</dbReference>
<dbReference type="PIR" id="JC4381">
    <property type="entry name" value="JC4381"/>
</dbReference>
<dbReference type="RefSeq" id="XP_448899.1">
    <property type="nucleotide sequence ID" value="XM_448899.1"/>
</dbReference>
<dbReference type="SMR" id="Q12578"/>
<dbReference type="FunCoup" id="Q12578">
    <property type="interactions" value="270"/>
</dbReference>
<dbReference type="STRING" id="284593.Q12578"/>
<dbReference type="EnsemblFungi" id="CAGL0L02937g-T">
    <property type="protein sequence ID" value="CAGL0L02937g-T-p1"/>
    <property type="gene ID" value="CAGL0L02937g"/>
</dbReference>
<dbReference type="GeneID" id="2890838"/>
<dbReference type="KEGG" id="cgr:2890838"/>
<dbReference type="CGD" id="CAL0135520">
    <property type="gene designation" value="HIS3"/>
</dbReference>
<dbReference type="VEuPathDB" id="FungiDB:B1J91_L02937g"/>
<dbReference type="VEuPathDB" id="FungiDB:CAGL0L02937g"/>
<dbReference type="eggNOG" id="KOG3143">
    <property type="taxonomic scope" value="Eukaryota"/>
</dbReference>
<dbReference type="HOGENOM" id="CLU_044308_3_0_1"/>
<dbReference type="InParanoid" id="Q12578"/>
<dbReference type="OMA" id="GIPFFDH"/>
<dbReference type="UniPathway" id="UPA00031">
    <property type="reaction ID" value="UER00011"/>
</dbReference>
<dbReference type="Proteomes" id="UP000002428">
    <property type="component" value="Chromosome L"/>
</dbReference>
<dbReference type="GO" id="GO:0004424">
    <property type="term" value="F:imidazoleglycerol-phosphate dehydratase activity"/>
    <property type="evidence" value="ECO:0007669"/>
    <property type="project" value="UniProtKB-EC"/>
</dbReference>
<dbReference type="GO" id="GO:0000105">
    <property type="term" value="P:L-histidine biosynthetic process"/>
    <property type="evidence" value="ECO:0000315"/>
    <property type="project" value="CGD"/>
</dbReference>
<dbReference type="CDD" id="cd07914">
    <property type="entry name" value="IGPD"/>
    <property type="match status" value="1"/>
</dbReference>
<dbReference type="FunFam" id="3.30.230.40:FF:000005">
    <property type="entry name" value="Imidazoleglycerol-phosphate dehydratase"/>
    <property type="match status" value="1"/>
</dbReference>
<dbReference type="FunFam" id="3.30.230.40:FF:000001">
    <property type="entry name" value="Imidazoleglycerol-phosphate dehydratase HisB"/>
    <property type="match status" value="1"/>
</dbReference>
<dbReference type="Gene3D" id="3.30.230.40">
    <property type="entry name" value="Imidazole glycerol phosphate dehydratase, domain 1"/>
    <property type="match status" value="2"/>
</dbReference>
<dbReference type="HAMAP" id="MF_00076">
    <property type="entry name" value="HisB"/>
    <property type="match status" value="1"/>
</dbReference>
<dbReference type="InterPro" id="IPR038494">
    <property type="entry name" value="IGPD_sf"/>
</dbReference>
<dbReference type="InterPro" id="IPR000807">
    <property type="entry name" value="ImidazoleglycerolP_deHydtase"/>
</dbReference>
<dbReference type="InterPro" id="IPR020565">
    <property type="entry name" value="ImidazoleglycerP_deHydtase_CS"/>
</dbReference>
<dbReference type="InterPro" id="IPR020568">
    <property type="entry name" value="Ribosomal_Su5_D2-typ_SF"/>
</dbReference>
<dbReference type="NCBIfam" id="NF002114">
    <property type="entry name" value="PRK00951.2-4"/>
    <property type="match status" value="1"/>
</dbReference>
<dbReference type="PANTHER" id="PTHR23133:SF2">
    <property type="entry name" value="IMIDAZOLEGLYCEROL-PHOSPHATE DEHYDRATASE"/>
    <property type="match status" value="1"/>
</dbReference>
<dbReference type="PANTHER" id="PTHR23133">
    <property type="entry name" value="IMIDAZOLEGLYCEROL-PHOSPHATE DEHYDRATASE HIS7"/>
    <property type="match status" value="1"/>
</dbReference>
<dbReference type="Pfam" id="PF00475">
    <property type="entry name" value="IGPD"/>
    <property type="match status" value="1"/>
</dbReference>
<dbReference type="SUPFAM" id="SSF54211">
    <property type="entry name" value="Ribosomal protein S5 domain 2-like"/>
    <property type="match status" value="2"/>
</dbReference>
<dbReference type="PROSITE" id="PS00954">
    <property type="entry name" value="IGP_DEHYDRATASE_1"/>
    <property type="match status" value="1"/>
</dbReference>
<dbReference type="PROSITE" id="PS00955">
    <property type="entry name" value="IGP_DEHYDRATASE_2"/>
    <property type="match status" value="1"/>
</dbReference>
<proteinExistence type="inferred from homology"/>
<name>HIS7_CANGA</name>
<sequence length="210" mass="22819">MAFVKRVTQETNIQLALDLDGGSVSVRESILGKEYASGDGQTIHVHTGVGFLDHMLTALAKHGGWSLILECIGDLHIDDHHTVEDCGIALGQAFKEALGSVRGIKRFGHGFAPLDEALSRAVVDFSNRPFAVVELGLKRERIGQLSTEMIPHFLESFATEARITMHVDCLRGTNDHHRSESAFKALAIAIREARTPTGRDDVPSTKGVLA</sequence>
<accession>Q12578</accession>
<accession>Q6FLJ5</accession>
<accession>Q8TFK9</accession>
<reference key="1">
    <citation type="journal article" date="1995" name="Gene">
        <title>Cloning of the Candida glabrata TRP1 and HIS3 genes, and construction of their disruptant strains by sequential integrative transformation.</title>
        <authorList>
            <person name="Kitada K."/>
            <person name="Yamaguchi E."/>
            <person name="Arisawa M."/>
        </authorList>
    </citation>
    <scope>NUCLEOTIDE SEQUENCE [GENOMIC DNA]</scope>
    <source>
        <strain>ATCC 2001 / BCRC 20586 / JCM 3761 / NBRC 0622 / NRRL Y-65 / CBS 138</strain>
    </source>
</reference>
<reference key="2">
    <citation type="journal article" date="2002" name="Yeast">
        <title>Genomic differences between Candida glabrata and Saccharomyces cerevisiae around the MRPL28 and GCN3 loci.</title>
        <authorList>
            <person name="Walsh D.W."/>
            <person name="Wolfe K.H."/>
            <person name="Butler G."/>
        </authorList>
    </citation>
    <scope>NUCLEOTIDE SEQUENCE [GENOMIC DNA]</scope>
    <source>
        <strain>ATCC 2001 / BCRC 20586 / JCM 3761 / NBRC 0622 / NRRL Y-65 / CBS 138</strain>
    </source>
</reference>
<reference key="3">
    <citation type="journal article" date="2004" name="Nature">
        <title>Genome evolution in yeasts.</title>
        <authorList>
            <person name="Dujon B."/>
            <person name="Sherman D."/>
            <person name="Fischer G."/>
            <person name="Durrens P."/>
            <person name="Casaregola S."/>
            <person name="Lafontaine I."/>
            <person name="de Montigny J."/>
            <person name="Marck C."/>
            <person name="Neuveglise C."/>
            <person name="Talla E."/>
            <person name="Goffard N."/>
            <person name="Frangeul L."/>
            <person name="Aigle M."/>
            <person name="Anthouard V."/>
            <person name="Babour A."/>
            <person name="Barbe V."/>
            <person name="Barnay S."/>
            <person name="Blanchin S."/>
            <person name="Beckerich J.-M."/>
            <person name="Beyne E."/>
            <person name="Bleykasten C."/>
            <person name="Boisrame A."/>
            <person name="Boyer J."/>
            <person name="Cattolico L."/>
            <person name="Confanioleri F."/>
            <person name="de Daruvar A."/>
            <person name="Despons L."/>
            <person name="Fabre E."/>
            <person name="Fairhead C."/>
            <person name="Ferry-Dumazet H."/>
            <person name="Groppi A."/>
            <person name="Hantraye F."/>
            <person name="Hennequin C."/>
            <person name="Jauniaux N."/>
            <person name="Joyet P."/>
            <person name="Kachouri R."/>
            <person name="Kerrest A."/>
            <person name="Koszul R."/>
            <person name="Lemaire M."/>
            <person name="Lesur I."/>
            <person name="Ma L."/>
            <person name="Muller H."/>
            <person name="Nicaud J.-M."/>
            <person name="Nikolski M."/>
            <person name="Oztas S."/>
            <person name="Ozier-Kalogeropoulos O."/>
            <person name="Pellenz S."/>
            <person name="Potier S."/>
            <person name="Richard G.-F."/>
            <person name="Straub M.-L."/>
            <person name="Suleau A."/>
            <person name="Swennen D."/>
            <person name="Tekaia F."/>
            <person name="Wesolowski-Louvel M."/>
            <person name="Westhof E."/>
            <person name="Wirth B."/>
            <person name="Zeniou-Meyer M."/>
            <person name="Zivanovic Y."/>
            <person name="Bolotin-Fukuhara M."/>
            <person name="Thierry A."/>
            <person name="Bouchier C."/>
            <person name="Caudron B."/>
            <person name="Scarpelli C."/>
            <person name="Gaillardin C."/>
            <person name="Weissenbach J."/>
            <person name="Wincker P."/>
            <person name="Souciet J.-L."/>
        </authorList>
    </citation>
    <scope>NUCLEOTIDE SEQUENCE [LARGE SCALE GENOMIC DNA]</scope>
    <source>
        <strain>ATCC 2001 / BCRC 20586 / JCM 3761 / NBRC 0622 / NRRL Y-65 / CBS 138</strain>
    </source>
</reference>
<organism>
    <name type="scientific">Candida glabrata (strain ATCC 2001 / BCRC 20586 / JCM 3761 / NBRC 0622 / NRRL Y-65 / CBS 138)</name>
    <name type="common">Yeast</name>
    <name type="synonym">Nakaseomyces glabratus</name>
    <dbReference type="NCBI Taxonomy" id="284593"/>
    <lineage>
        <taxon>Eukaryota</taxon>
        <taxon>Fungi</taxon>
        <taxon>Dikarya</taxon>
        <taxon>Ascomycota</taxon>
        <taxon>Saccharomycotina</taxon>
        <taxon>Saccharomycetes</taxon>
        <taxon>Saccharomycetales</taxon>
        <taxon>Saccharomycetaceae</taxon>
        <taxon>Nakaseomyces</taxon>
    </lineage>
</organism>
<feature type="chain" id="PRO_0000158235" description="Imidazoleglycerol-phosphate dehydratase">
    <location>
        <begin position="1"/>
        <end position="210"/>
    </location>
</feature>
<feature type="sequence conflict" description="In Ref. 1 and 2." evidence="1" ref="1 2">
    <original>A</original>
    <variation>G</variation>
    <location>
        <position position="161"/>
    </location>
</feature>
<feature type="sequence conflict" description="In Ref. 1; AAC49145." evidence="1" ref="1">
    <original>A</original>
    <variation>G</variation>
    <location>
        <position position="182"/>
    </location>
</feature>